<proteinExistence type="inferred from homology"/>
<keyword id="KW-1185">Reference proteome</keyword>
<keyword id="KW-0687">Ribonucleoprotein</keyword>
<keyword id="KW-0689">Ribosomal protein</keyword>
<keyword id="KW-0694">RNA-binding</keyword>
<keyword id="KW-0699">rRNA-binding</keyword>
<keyword id="KW-0820">tRNA-binding</keyword>
<evidence type="ECO:0000255" key="1">
    <source>
        <dbReference type="HAMAP-Rule" id="MF_01333"/>
    </source>
</evidence>
<evidence type="ECO:0000305" key="2"/>
<gene>
    <name evidence="1" type="primary">rplE</name>
    <name type="ordered locus">VF_0249</name>
</gene>
<name>RL5_ALIF1</name>
<reference key="1">
    <citation type="journal article" date="2005" name="Proc. Natl. Acad. Sci. U.S.A.">
        <title>Complete genome sequence of Vibrio fischeri: a symbiotic bacterium with pathogenic congeners.</title>
        <authorList>
            <person name="Ruby E.G."/>
            <person name="Urbanowski M."/>
            <person name="Campbell J."/>
            <person name="Dunn A."/>
            <person name="Faini M."/>
            <person name="Gunsalus R."/>
            <person name="Lostroh P."/>
            <person name="Lupp C."/>
            <person name="McCann J."/>
            <person name="Millikan D."/>
            <person name="Schaefer A."/>
            <person name="Stabb E."/>
            <person name="Stevens A."/>
            <person name="Visick K."/>
            <person name="Whistler C."/>
            <person name="Greenberg E.P."/>
        </authorList>
    </citation>
    <scope>NUCLEOTIDE SEQUENCE [LARGE SCALE GENOMIC DNA]</scope>
    <source>
        <strain>ATCC 700601 / ES114</strain>
    </source>
</reference>
<feature type="chain" id="PRO_0000243084" description="Large ribosomal subunit protein uL5">
    <location>
        <begin position="1"/>
        <end position="178"/>
    </location>
</feature>
<sequence>MAKLHDYYKSSVVAELTKEFSYTSVMQVPRVEKITLNMGVGEAINDKKLLENAAADMAIISGQKPLITKARKSVAGFKIREGYPIGCKVTLRGERMWEFLERLISIALPRVRDFRGVSAKSFDGRGNYSMGVREQIIFPEIDYDKVDRVRGLDITITTSANTDAEGRALLAAFNFPIP</sequence>
<organism>
    <name type="scientific">Aliivibrio fischeri (strain ATCC 700601 / ES114)</name>
    <name type="common">Vibrio fischeri</name>
    <dbReference type="NCBI Taxonomy" id="312309"/>
    <lineage>
        <taxon>Bacteria</taxon>
        <taxon>Pseudomonadati</taxon>
        <taxon>Pseudomonadota</taxon>
        <taxon>Gammaproteobacteria</taxon>
        <taxon>Vibrionales</taxon>
        <taxon>Vibrionaceae</taxon>
        <taxon>Aliivibrio</taxon>
    </lineage>
</organism>
<comment type="function">
    <text evidence="1">This is one of the proteins that bind and probably mediate the attachment of the 5S RNA into the large ribosomal subunit, where it forms part of the central protuberance. In the 70S ribosome it contacts protein S13 of the 30S subunit (bridge B1b), connecting the 2 subunits; this bridge is implicated in subunit movement. Contacts the P site tRNA; the 5S rRNA and some of its associated proteins might help stabilize positioning of ribosome-bound tRNAs.</text>
</comment>
<comment type="subunit">
    <text evidence="1">Part of the 50S ribosomal subunit; part of the 5S rRNA/L5/L18/L25 subcomplex. Contacts the 5S rRNA and the P site tRNA. Forms a bridge to the 30S subunit in the 70S ribosome.</text>
</comment>
<comment type="similarity">
    <text evidence="1">Belongs to the universal ribosomal protein uL5 family.</text>
</comment>
<dbReference type="EMBL" id="CP000020">
    <property type="protein sequence ID" value="AAW84744.1"/>
    <property type="molecule type" value="Genomic_DNA"/>
</dbReference>
<dbReference type="RefSeq" id="WP_011261078.1">
    <property type="nucleotide sequence ID" value="NC_006840.2"/>
</dbReference>
<dbReference type="RefSeq" id="YP_203632.1">
    <property type="nucleotide sequence ID" value="NC_006840.2"/>
</dbReference>
<dbReference type="SMR" id="Q5E8A2"/>
<dbReference type="STRING" id="312309.VF_0249"/>
<dbReference type="EnsemblBacteria" id="AAW84744">
    <property type="protein sequence ID" value="AAW84744"/>
    <property type="gene ID" value="VF_0249"/>
</dbReference>
<dbReference type="GeneID" id="54162870"/>
<dbReference type="KEGG" id="vfi:VF_0249"/>
<dbReference type="PATRIC" id="fig|312309.11.peg.244"/>
<dbReference type="eggNOG" id="COG0094">
    <property type="taxonomic scope" value="Bacteria"/>
</dbReference>
<dbReference type="HOGENOM" id="CLU_061015_2_1_6"/>
<dbReference type="OrthoDB" id="9806626at2"/>
<dbReference type="Proteomes" id="UP000000537">
    <property type="component" value="Chromosome I"/>
</dbReference>
<dbReference type="GO" id="GO:1990904">
    <property type="term" value="C:ribonucleoprotein complex"/>
    <property type="evidence" value="ECO:0007669"/>
    <property type="project" value="UniProtKB-KW"/>
</dbReference>
<dbReference type="GO" id="GO:0005840">
    <property type="term" value="C:ribosome"/>
    <property type="evidence" value="ECO:0007669"/>
    <property type="project" value="UniProtKB-KW"/>
</dbReference>
<dbReference type="GO" id="GO:0019843">
    <property type="term" value="F:rRNA binding"/>
    <property type="evidence" value="ECO:0007669"/>
    <property type="project" value="UniProtKB-UniRule"/>
</dbReference>
<dbReference type="GO" id="GO:0003735">
    <property type="term" value="F:structural constituent of ribosome"/>
    <property type="evidence" value="ECO:0007669"/>
    <property type="project" value="InterPro"/>
</dbReference>
<dbReference type="GO" id="GO:0000049">
    <property type="term" value="F:tRNA binding"/>
    <property type="evidence" value="ECO:0007669"/>
    <property type="project" value="UniProtKB-UniRule"/>
</dbReference>
<dbReference type="GO" id="GO:0006412">
    <property type="term" value="P:translation"/>
    <property type="evidence" value="ECO:0007669"/>
    <property type="project" value="UniProtKB-UniRule"/>
</dbReference>
<dbReference type="FunFam" id="3.30.1440.10:FF:000001">
    <property type="entry name" value="50S ribosomal protein L5"/>
    <property type="match status" value="1"/>
</dbReference>
<dbReference type="Gene3D" id="3.30.1440.10">
    <property type="match status" value="1"/>
</dbReference>
<dbReference type="HAMAP" id="MF_01333_B">
    <property type="entry name" value="Ribosomal_uL5_B"/>
    <property type="match status" value="1"/>
</dbReference>
<dbReference type="InterPro" id="IPR002132">
    <property type="entry name" value="Ribosomal_uL5"/>
</dbReference>
<dbReference type="InterPro" id="IPR020930">
    <property type="entry name" value="Ribosomal_uL5_bac-type"/>
</dbReference>
<dbReference type="InterPro" id="IPR031309">
    <property type="entry name" value="Ribosomal_uL5_C"/>
</dbReference>
<dbReference type="InterPro" id="IPR020929">
    <property type="entry name" value="Ribosomal_uL5_CS"/>
</dbReference>
<dbReference type="InterPro" id="IPR022803">
    <property type="entry name" value="Ribosomal_uL5_dom_sf"/>
</dbReference>
<dbReference type="InterPro" id="IPR031310">
    <property type="entry name" value="Ribosomal_uL5_N"/>
</dbReference>
<dbReference type="NCBIfam" id="NF000585">
    <property type="entry name" value="PRK00010.1"/>
    <property type="match status" value="1"/>
</dbReference>
<dbReference type="PANTHER" id="PTHR11994">
    <property type="entry name" value="60S RIBOSOMAL PROTEIN L11-RELATED"/>
    <property type="match status" value="1"/>
</dbReference>
<dbReference type="Pfam" id="PF00281">
    <property type="entry name" value="Ribosomal_L5"/>
    <property type="match status" value="1"/>
</dbReference>
<dbReference type="Pfam" id="PF00673">
    <property type="entry name" value="Ribosomal_L5_C"/>
    <property type="match status" value="1"/>
</dbReference>
<dbReference type="PIRSF" id="PIRSF002161">
    <property type="entry name" value="Ribosomal_L5"/>
    <property type="match status" value="1"/>
</dbReference>
<dbReference type="SUPFAM" id="SSF55282">
    <property type="entry name" value="RL5-like"/>
    <property type="match status" value="1"/>
</dbReference>
<dbReference type="PROSITE" id="PS00358">
    <property type="entry name" value="RIBOSOMAL_L5"/>
    <property type="match status" value="1"/>
</dbReference>
<protein>
    <recommendedName>
        <fullName evidence="1">Large ribosomal subunit protein uL5</fullName>
    </recommendedName>
    <alternativeName>
        <fullName evidence="2">50S ribosomal protein L5</fullName>
    </alternativeName>
</protein>
<accession>Q5E8A2</accession>